<evidence type="ECO:0000255" key="1">
    <source>
        <dbReference type="HAMAP-Rule" id="MF_01633"/>
    </source>
</evidence>
<protein>
    <recommendedName>
        <fullName evidence="1">7-cyano-7-deazaguanine synthase</fullName>
        <ecNumber evidence="1">6.3.4.20</ecNumber>
    </recommendedName>
    <alternativeName>
        <fullName evidence="1">7-cyano-7-carbaguanine synthase</fullName>
    </alternativeName>
    <alternativeName>
        <fullName evidence="1">PreQ(0) synthase</fullName>
    </alternativeName>
    <alternativeName>
        <fullName evidence="1">Queuosine biosynthesis protein QueC</fullName>
    </alternativeName>
</protein>
<name>QUEC_NITEU</name>
<reference key="1">
    <citation type="journal article" date="2003" name="J. Bacteriol.">
        <title>Complete genome sequence of the ammonia-oxidizing bacterium and obligate chemolithoautotroph Nitrosomonas europaea.</title>
        <authorList>
            <person name="Chain P."/>
            <person name="Lamerdin J.E."/>
            <person name="Larimer F.W."/>
            <person name="Regala W."/>
            <person name="Lao V."/>
            <person name="Land M.L."/>
            <person name="Hauser L."/>
            <person name="Hooper A.B."/>
            <person name="Klotz M.G."/>
            <person name="Norton J."/>
            <person name="Sayavedra-Soto L.A."/>
            <person name="Arciero D.M."/>
            <person name="Hommes N.G."/>
            <person name="Whittaker M.M."/>
            <person name="Arp D.J."/>
        </authorList>
    </citation>
    <scope>NUCLEOTIDE SEQUENCE [LARGE SCALE GENOMIC DNA]</scope>
    <source>
        <strain>ATCC 19718 / CIP 103999 / KCTC 2705 / NBRC 14298</strain>
    </source>
</reference>
<sequence>MKKAVVLLSGGMDSATTLAIARQSGFACYALSIDYGQRHVAELAAAARIGQSLQVSDHQFLKLDLAVLASSVLTDISATVPLHGTSTGIPVTYVPARNTIMLALALAWAEVLGSHDIFIGVTAVDYSGYPDCRRDYIDAFEKMANLATKAGREGMVLTVHAPLIDLPKREIIQCGMELGIDYGLTVSCYQADEAGYACGQCDACHIRRAGFEAADIPDPTCYRNKQIS</sequence>
<keyword id="KW-0067">ATP-binding</keyword>
<keyword id="KW-0436">Ligase</keyword>
<keyword id="KW-0479">Metal-binding</keyword>
<keyword id="KW-0547">Nucleotide-binding</keyword>
<keyword id="KW-0671">Queuosine biosynthesis</keyword>
<keyword id="KW-1185">Reference proteome</keyword>
<keyword id="KW-0862">Zinc</keyword>
<proteinExistence type="inferred from homology"/>
<accession>Q82XN5</accession>
<gene>
    <name evidence="1" type="primary">queC</name>
    <name type="ordered locus">NE0222</name>
</gene>
<dbReference type="EC" id="6.3.4.20" evidence="1"/>
<dbReference type="EMBL" id="AL954747">
    <property type="protein sequence ID" value="CAD84133.1"/>
    <property type="molecule type" value="Genomic_DNA"/>
</dbReference>
<dbReference type="RefSeq" id="WP_011110867.1">
    <property type="nucleotide sequence ID" value="NC_004757.1"/>
</dbReference>
<dbReference type="SMR" id="Q82XN5"/>
<dbReference type="STRING" id="228410.NE0222"/>
<dbReference type="GeneID" id="87103429"/>
<dbReference type="KEGG" id="neu:NE0222"/>
<dbReference type="eggNOG" id="COG0603">
    <property type="taxonomic scope" value="Bacteria"/>
</dbReference>
<dbReference type="HOGENOM" id="CLU_081854_1_1_4"/>
<dbReference type="OrthoDB" id="9789567at2"/>
<dbReference type="PhylomeDB" id="Q82XN5"/>
<dbReference type="UniPathway" id="UPA00391"/>
<dbReference type="Proteomes" id="UP000001416">
    <property type="component" value="Chromosome"/>
</dbReference>
<dbReference type="GO" id="GO:0005524">
    <property type="term" value="F:ATP binding"/>
    <property type="evidence" value="ECO:0007669"/>
    <property type="project" value="UniProtKB-UniRule"/>
</dbReference>
<dbReference type="GO" id="GO:0016879">
    <property type="term" value="F:ligase activity, forming carbon-nitrogen bonds"/>
    <property type="evidence" value="ECO:0007669"/>
    <property type="project" value="UniProtKB-UniRule"/>
</dbReference>
<dbReference type="GO" id="GO:0008270">
    <property type="term" value="F:zinc ion binding"/>
    <property type="evidence" value="ECO:0007669"/>
    <property type="project" value="UniProtKB-UniRule"/>
</dbReference>
<dbReference type="GO" id="GO:0008616">
    <property type="term" value="P:queuosine biosynthetic process"/>
    <property type="evidence" value="ECO:0007669"/>
    <property type="project" value="UniProtKB-UniRule"/>
</dbReference>
<dbReference type="CDD" id="cd01995">
    <property type="entry name" value="QueC-like"/>
    <property type="match status" value="1"/>
</dbReference>
<dbReference type="Gene3D" id="3.40.50.620">
    <property type="entry name" value="HUPs"/>
    <property type="match status" value="1"/>
</dbReference>
<dbReference type="HAMAP" id="MF_01633">
    <property type="entry name" value="QueC"/>
    <property type="match status" value="1"/>
</dbReference>
<dbReference type="InterPro" id="IPR018317">
    <property type="entry name" value="QueC"/>
</dbReference>
<dbReference type="InterPro" id="IPR014729">
    <property type="entry name" value="Rossmann-like_a/b/a_fold"/>
</dbReference>
<dbReference type="NCBIfam" id="TIGR00364">
    <property type="entry name" value="7-cyano-7-deazaguanine synthase QueC"/>
    <property type="match status" value="1"/>
</dbReference>
<dbReference type="PANTHER" id="PTHR42914">
    <property type="entry name" value="7-CYANO-7-DEAZAGUANINE SYNTHASE"/>
    <property type="match status" value="1"/>
</dbReference>
<dbReference type="PANTHER" id="PTHR42914:SF1">
    <property type="entry name" value="7-CYANO-7-DEAZAGUANINE SYNTHASE"/>
    <property type="match status" value="1"/>
</dbReference>
<dbReference type="Pfam" id="PF06508">
    <property type="entry name" value="QueC"/>
    <property type="match status" value="1"/>
</dbReference>
<dbReference type="PIRSF" id="PIRSF006293">
    <property type="entry name" value="ExsB"/>
    <property type="match status" value="1"/>
</dbReference>
<dbReference type="SUPFAM" id="SSF52402">
    <property type="entry name" value="Adenine nucleotide alpha hydrolases-like"/>
    <property type="match status" value="1"/>
</dbReference>
<comment type="function">
    <text evidence="1">Catalyzes the ATP-dependent conversion of 7-carboxy-7-deazaguanine (CDG) to 7-cyano-7-deazaguanine (preQ(0)).</text>
</comment>
<comment type="catalytic activity">
    <reaction evidence="1">
        <text>7-carboxy-7-deazaguanine + NH4(+) + ATP = 7-cyano-7-deazaguanine + ADP + phosphate + H2O + H(+)</text>
        <dbReference type="Rhea" id="RHEA:27982"/>
        <dbReference type="ChEBI" id="CHEBI:15377"/>
        <dbReference type="ChEBI" id="CHEBI:15378"/>
        <dbReference type="ChEBI" id="CHEBI:28938"/>
        <dbReference type="ChEBI" id="CHEBI:30616"/>
        <dbReference type="ChEBI" id="CHEBI:43474"/>
        <dbReference type="ChEBI" id="CHEBI:45075"/>
        <dbReference type="ChEBI" id="CHEBI:61036"/>
        <dbReference type="ChEBI" id="CHEBI:456216"/>
        <dbReference type="EC" id="6.3.4.20"/>
    </reaction>
</comment>
<comment type="cofactor">
    <cofactor evidence="1">
        <name>Zn(2+)</name>
        <dbReference type="ChEBI" id="CHEBI:29105"/>
    </cofactor>
    <text evidence="1">Binds 1 zinc ion per subunit.</text>
</comment>
<comment type="pathway">
    <text evidence="1">Purine metabolism; 7-cyano-7-deazaguanine biosynthesis.</text>
</comment>
<comment type="similarity">
    <text evidence="1">Belongs to the QueC family.</text>
</comment>
<feature type="chain" id="PRO_0000246868" description="7-cyano-7-deazaguanine synthase">
    <location>
        <begin position="1"/>
        <end position="228"/>
    </location>
</feature>
<feature type="binding site" evidence="1">
    <location>
        <begin position="8"/>
        <end position="18"/>
    </location>
    <ligand>
        <name>ATP</name>
        <dbReference type="ChEBI" id="CHEBI:30616"/>
    </ligand>
</feature>
<feature type="binding site" evidence="1">
    <location>
        <position position="188"/>
    </location>
    <ligand>
        <name>Zn(2+)</name>
        <dbReference type="ChEBI" id="CHEBI:29105"/>
    </ligand>
</feature>
<feature type="binding site" evidence="1">
    <location>
        <position position="198"/>
    </location>
    <ligand>
        <name>Zn(2+)</name>
        <dbReference type="ChEBI" id="CHEBI:29105"/>
    </ligand>
</feature>
<feature type="binding site" evidence="1">
    <location>
        <position position="201"/>
    </location>
    <ligand>
        <name>Zn(2+)</name>
        <dbReference type="ChEBI" id="CHEBI:29105"/>
    </ligand>
</feature>
<feature type="binding site" evidence="1">
    <location>
        <position position="204"/>
    </location>
    <ligand>
        <name>Zn(2+)</name>
        <dbReference type="ChEBI" id="CHEBI:29105"/>
    </ligand>
</feature>
<organism>
    <name type="scientific">Nitrosomonas europaea (strain ATCC 19718 / CIP 103999 / KCTC 2705 / NBRC 14298)</name>
    <dbReference type="NCBI Taxonomy" id="228410"/>
    <lineage>
        <taxon>Bacteria</taxon>
        <taxon>Pseudomonadati</taxon>
        <taxon>Pseudomonadota</taxon>
        <taxon>Betaproteobacteria</taxon>
        <taxon>Nitrosomonadales</taxon>
        <taxon>Nitrosomonadaceae</taxon>
        <taxon>Nitrosomonas</taxon>
    </lineage>
</organism>